<proteinExistence type="inferred from homology"/>
<dbReference type="EMBL" id="CP000076">
    <property type="protein sequence ID" value="AAY94843.1"/>
    <property type="molecule type" value="Genomic_DNA"/>
</dbReference>
<dbReference type="RefSeq" id="WP_011063828.1">
    <property type="nucleotide sequence ID" value="NC_004129.6"/>
</dbReference>
<dbReference type="SMR" id="Q4K4X4"/>
<dbReference type="STRING" id="220664.PFL_5650"/>
<dbReference type="GeneID" id="57478600"/>
<dbReference type="KEGG" id="pfl:PFL_5650"/>
<dbReference type="PATRIC" id="fig|220664.5.peg.5762"/>
<dbReference type="eggNOG" id="COG2967">
    <property type="taxonomic scope" value="Bacteria"/>
</dbReference>
<dbReference type="HOGENOM" id="CLU_128074_0_0_6"/>
<dbReference type="Proteomes" id="UP000008540">
    <property type="component" value="Chromosome"/>
</dbReference>
<dbReference type="GO" id="GO:0070987">
    <property type="term" value="P:error-free translesion synthesis"/>
    <property type="evidence" value="ECO:0007669"/>
    <property type="project" value="TreeGrafter"/>
</dbReference>
<dbReference type="Gene3D" id="2.60.40.1470">
    <property type="entry name" value="ApaG domain"/>
    <property type="match status" value="1"/>
</dbReference>
<dbReference type="HAMAP" id="MF_00791">
    <property type="entry name" value="ApaG"/>
    <property type="match status" value="1"/>
</dbReference>
<dbReference type="InterPro" id="IPR007474">
    <property type="entry name" value="ApaG_domain"/>
</dbReference>
<dbReference type="InterPro" id="IPR036767">
    <property type="entry name" value="ApaG_sf"/>
</dbReference>
<dbReference type="InterPro" id="IPR023065">
    <property type="entry name" value="Uncharacterised_ApaG"/>
</dbReference>
<dbReference type="NCBIfam" id="NF003967">
    <property type="entry name" value="PRK05461.1"/>
    <property type="match status" value="1"/>
</dbReference>
<dbReference type="PANTHER" id="PTHR14289">
    <property type="entry name" value="F-BOX ONLY PROTEIN 3"/>
    <property type="match status" value="1"/>
</dbReference>
<dbReference type="PANTHER" id="PTHR14289:SF16">
    <property type="entry name" value="POLYMERASE DELTA-INTERACTING PROTEIN 2"/>
    <property type="match status" value="1"/>
</dbReference>
<dbReference type="Pfam" id="PF04379">
    <property type="entry name" value="DUF525"/>
    <property type="match status" value="1"/>
</dbReference>
<dbReference type="SUPFAM" id="SSF110069">
    <property type="entry name" value="ApaG-like"/>
    <property type="match status" value="1"/>
</dbReference>
<dbReference type="PROSITE" id="PS51087">
    <property type="entry name" value="APAG"/>
    <property type="match status" value="1"/>
</dbReference>
<feature type="chain" id="PRO_1000083634" description="Protein ApaG">
    <location>
        <begin position="1"/>
        <end position="126"/>
    </location>
</feature>
<feature type="domain" description="ApaG" evidence="1">
    <location>
        <begin position="2"/>
        <end position="126"/>
    </location>
</feature>
<gene>
    <name evidence="1" type="primary">apaG</name>
    <name type="ordered locus">PFL_5650</name>
</gene>
<reference key="1">
    <citation type="journal article" date="2005" name="Nat. Biotechnol.">
        <title>Complete genome sequence of the plant commensal Pseudomonas fluorescens Pf-5.</title>
        <authorList>
            <person name="Paulsen I.T."/>
            <person name="Press C.M."/>
            <person name="Ravel J."/>
            <person name="Kobayashi D.Y."/>
            <person name="Myers G.S.A."/>
            <person name="Mavrodi D.V."/>
            <person name="DeBoy R.T."/>
            <person name="Seshadri R."/>
            <person name="Ren Q."/>
            <person name="Madupu R."/>
            <person name="Dodson R.J."/>
            <person name="Durkin A.S."/>
            <person name="Brinkac L.M."/>
            <person name="Daugherty S.C."/>
            <person name="Sullivan S.A."/>
            <person name="Rosovitz M.J."/>
            <person name="Gwinn M.L."/>
            <person name="Zhou L."/>
            <person name="Schneider D.J."/>
            <person name="Cartinhour S.W."/>
            <person name="Nelson W.C."/>
            <person name="Weidman J."/>
            <person name="Watkins K."/>
            <person name="Tran K."/>
            <person name="Khouri H."/>
            <person name="Pierson E.A."/>
            <person name="Pierson L.S. III"/>
            <person name="Thomashow L.S."/>
            <person name="Loper J.E."/>
        </authorList>
    </citation>
    <scope>NUCLEOTIDE SEQUENCE [LARGE SCALE GENOMIC DNA]</scope>
    <source>
        <strain>ATCC BAA-477 / NRRL B-23932 / Pf-5</strain>
    </source>
</reference>
<organism>
    <name type="scientific">Pseudomonas fluorescens (strain ATCC BAA-477 / NRRL B-23932 / Pf-5)</name>
    <dbReference type="NCBI Taxonomy" id="220664"/>
    <lineage>
        <taxon>Bacteria</taxon>
        <taxon>Pseudomonadati</taxon>
        <taxon>Pseudomonadota</taxon>
        <taxon>Gammaproteobacteria</taxon>
        <taxon>Pseudomonadales</taxon>
        <taxon>Pseudomonadaceae</taxon>
        <taxon>Pseudomonas</taxon>
    </lineage>
</organism>
<evidence type="ECO:0000255" key="1">
    <source>
        <dbReference type="HAMAP-Rule" id="MF_00791"/>
    </source>
</evidence>
<name>APAG_PSEF5</name>
<protein>
    <recommendedName>
        <fullName evidence="1">Protein ApaG</fullName>
    </recommendedName>
</protein>
<sequence>MSDPRYQVDVSVVTRFLADQSQPEQNRFAFAYTITVQNNGSLPAKLLSRHWVITDGDGHVEEVRGAGVVGQQPLIAAGKSHTYSSGTVMTTRVGNMQGSYQMLAEDGKQFDAVIAPFRLAVPGALH</sequence>
<accession>Q4K4X4</accession>